<name>TXM16_MACGS</name>
<dbReference type="ArachnoServer" id="AS000370">
    <property type="toxin name" value="U15-hexatoxin-Mg1b"/>
</dbReference>
<dbReference type="GO" id="GO:0005576">
    <property type="term" value="C:extracellular region"/>
    <property type="evidence" value="ECO:0007669"/>
    <property type="project" value="UniProtKB-SubCell"/>
</dbReference>
<dbReference type="GO" id="GO:0090729">
    <property type="term" value="F:toxin activity"/>
    <property type="evidence" value="ECO:0007669"/>
    <property type="project" value="UniProtKB-KW"/>
</dbReference>
<sequence length="65" mass="6909">ACSKQLGEKCKCNKQCCGATVVCGTIWVGGKEVNKCMSKTSNNWFLNKLGEGMNAVANAFSISCN</sequence>
<comment type="function">
    <text evidence="1">In vivo, intrathorax injection into crickets causes death.</text>
</comment>
<comment type="subcellular location">
    <subcellularLocation>
        <location evidence="1">Secreted</location>
    </subcellularLocation>
</comment>
<comment type="tissue specificity">
    <text evidence="4">Expressed by the venom gland.</text>
</comment>
<comment type="PTM">
    <text evidence="3">Contains 4 disulfide bonds.</text>
</comment>
<comment type="mass spectrometry" mass="6901.3" method="MALDI" evidence="1"/>
<comment type="similarity">
    <text>Belongs to the neurotoxin 25 family. F7 subfamily.</text>
</comment>
<accession>P0C2V2</accession>
<evidence type="ECO:0000269" key="1">
    <source>
    </source>
</evidence>
<evidence type="ECO:0000303" key="2">
    <source>
    </source>
</evidence>
<evidence type="ECO:0000305" key="3"/>
<evidence type="ECO:0000305" key="4">
    <source>
    </source>
</evidence>
<feature type="chain" id="PRO_0000285716" description="U15-hexatoxin-Mg1b">
    <location>
        <begin position="1"/>
        <end position="65"/>
    </location>
</feature>
<proteinExistence type="evidence at protein level"/>
<protein>
    <recommendedName>
        <fullName>U15-hexatoxin-Mg1b</fullName>
        <shortName>U15-HXTX-Mg1b</shortName>
    </recommendedName>
    <alternativeName>
        <fullName evidence="2">Neurotoxin magi-16</fullName>
    </alternativeName>
</protein>
<organism>
    <name type="scientific">Macrothele gigas</name>
    <name type="common">Japanese funnel web spider</name>
    <dbReference type="NCBI Taxonomy" id="223896"/>
    <lineage>
        <taxon>Eukaryota</taxon>
        <taxon>Metazoa</taxon>
        <taxon>Ecdysozoa</taxon>
        <taxon>Arthropoda</taxon>
        <taxon>Chelicerata</taxon>
        <taxon>Arachnida</taxon>
        <taxon>Araneae</taxon>
        <taxon>Mygalomorphae</taxon>
        <taxon>Macrothelidae</taxon>
        <taxon>Macrothele</taxon>
    </lineage>
</organism>
<keyword id="KW-1015">Disulfide bond</keyword>
<keyword id="KW-0528">Neurotoxin</keyword>
<keyword id="KW-0964">Secreted</keyword>
<keyword id="KW-0800">Toxin</keyword>
<reference key="1">
    <citation type="journal article" date="2004" name="Toxicon">
        <title>Rapid and efficient identification of cysteine-rich peptides by random screening of a venom gland cDNA library from the hexathelid spider Macrothele gigas.</title>
        <authorList>
            <person name="Satake H."/>
            <person name="Villegas E."/>
            <person name="Oshiro N."/>
            <person name="Terada K."/>
            <person name="Shinada T."/>
            <person name="Corzo G."/>
        </authorList>
    </citation>
    <scope>NUCLEOTIDE SEQUENCE [MRNA]</scope>
    <scope>FUNCTION</scope>
    <scope>MASS SPECTROMETRY</scope>
    <scope>SUBCELLULAR LOCATION</scope>
    <source>
        <tissue>Venom</tissue>
        <tissue>Venom gland</tissue>
    </source>
</reference>